<accession>P0DPW5</accession>
<comment type="subcellular location">
    <subcellularLocation>
        <location evidence="5">Secreted</location>
    </subcellularLocation>
</comment>
<comment type="tissue specificity">
    <text evidence="5">Expressed by the venom gland.</text>
</comment>
<comment type="PTM">
    <text evidence="4">Contains 3 disulfide bonds.</text>
</comment>
<comment type="similarity">
    <text evidence="4">Belongs to the scoloptoxin-01 family.</text>
</comment>
<comment type="online information" name="National Center for Biotechnology Information (NCBI)">
    <link uri="https://www.ncbi.nlm.nih.gov/nuccore/GASL01000036"/>
</comment>
<dbReference type="GO" id="GO:0005576">
    <property type="term" value="C:extracellular region"/>
    <property type="evidence" value="ECO:0007669"/>
    <property type="project" value="UniProtKB-SubCell"/>
</dbReference>
<dbReference type="GO" id="GO:0008061">
    <property type="term" value="F:chitin binding"/>
    <property type="evidence" value="ECO:0007669"/>
    <property type="project" value="UniProtKB-KW"/>
</dbReference>
<dbReference type="GO" id="GO:0090729">
    <property type="term" value="F:toxin activity"/>
    <property type="evidence" value="ECO:0007669"/>
    <property type="project" value="UniProtKB-KW"/>
</dbReference>
<dbReference type="Gene3D" id="2.170.140.10">
    <property type="entry name" value="Chitin binding domain"/>
    <property type="match status" value="1"/>
</dbReference>
<dbReference type="InterPro" id="IPR002557">
    <property type="entry name" value="Chitin-bd_dom"/>
</dbReference>
<dbReference type="InterPro" id="IPR036508">
    <property type="entry name" value="Chitin-bd_dom_sf"/>
</dbReference>
<dbReference type="InterPro" id="IPR052976">
    <property type="entry name" value="Scoloptoxin-like"/>
</dbReference>
<dbReference type="PANTHER" id="PTHR22933:SF31">
    <property type="entry name" value="FI18007P1"/>
    <property type="match status" value="1"/>
</dbReference>
<dbReference type="PANTHER" id="PTHR22933">
    <property type="entry name" value="FI18007P1-RELATED"/>
    <property type="match status" value="1"/>
</dbReference>
<dbReference type="Pfam" id="PF01607">
    <property type="entry name" value="CBM_14"/>
    <property type="match status" value="1"/>
</dbReference>
<dbReference type="SMART" id="SM00494">
    <property type="entry name" value="ChtBD2"/>
    <property type="match status" value="1"/>
</dbReference>
<dbReference type="SUPFAM" id="SSF57625">
    <property type="entry name" value="Invertebrate chitin-binding proteins"/>
    <property type="match status" value="1"/>
</dbReference>
<dbReference type="PROSITE" id="PS50940">
    <property type="entry name" value="CHIT_BIND_II"/>
    <property type="match status" value="1"/>
</dbReference>
<evidence type="ECO:0000255" key="1"/>
<evidence type="ECO:0000255" key="2">
    <source>
        <dbReference type="PROSITE-ProRule" id="PRU00144"/>
    </source>
</evidence>
<evidence type="ECO:0000303" key="3">
    <source>
    </source>
</evidence>
<evidence type="ECO:0000305" key="4"/>
<evidence type="ECO:0000305" key="5">
    <source>
    </source>
</evidence>
<organism>
    <name type="scientific">Cormocephalus westwoodi</name>
    <name type="common">Westwood's green centipede</name>
    <dbReference type="NCBI Taxonomy" id="1096223"/>
    <lineage>
        <taxon>Eukaryota</taxon>
        <taxon>Metazoa</taxon>
        <taxon>Ecdysozoa</taxon>
        <taxon>Arthropoda</taxon>
        <taxon>Myriapoda</taxon>
        <taxon>Chilopoda</taxon>
        <taxon>Pleurostigmophora</taxon>
        <taxon>Scolopendromorpha</taxon>
        <taxon>Scolopendridae</taxon>
        <taxon>Cormocephalus</taxon>
    </lineage>
</organism>
<name>TX11A_CORWE</name>
<protein>
    <recommendedName>
        <fullName evidence="3">U-scoloptoxin(01)-Cw1a</fullName>
        <shortName evidence="3">U-SLPTX(01)-Cw1a</shortName>
    </recommendedName>
</protein>
<proteinExistence type="inferred from homology"/>
<sequence length="119" mass="12999">MSKATNFYLFVLLGVFVALVRTEDEKPPNLTRVPSGLSFSCDGKKPGYYADQQMECQVYHVCTPDNEHAVLLCGPGTIFNQKHLVCDFPSNYACADAAKDADDANAHAFEVKVSPTPVP</sequence>
<feature type="signal peptide" evidence="1">
    <location>
        <begin position="1"/>
        <end position="22"/>
    </location>
</feature>
<feature type="chain" id="PRO_0000446687" description="U-scoloptoxin(01)-Cw1a" evidence="4">
    <location>
        <begin position="23"/>
        <end position="119"/>
    </location>
</feature>
<feature type="domain" description="Chitin-binding type-2" evidence="2">
    <location>
        <begin position="38"/>
        <end position="96"/>
    </location>
</feature>
<feature type="disulfide bond" evidence="2">
    <location>
        <begin position="73"/>
        <end position="86"/>
    </location>
</feature>
<keyword id="KW-0147">Chitin-binding</keyword>
<keyword id="KW-1015">Disulfide bond</keyword>
<keyword id="KW-0964">Secreted</keyword>
<keyword id="KW-0732">Signal</keyword>
<keyword id="KW-0800">Toxin</keyword>
<reference key="1">
    <citation type="journal article" date="2014" name="Mol. Biol. Evol.">
        <title>Clawing through evolution: toxin diversification and convergence in the ancient lineage Chilopoda (centipedes).</title>
        <authorList>
            <person name="Undheim E.A."/>
            <person name="Jones A."/>
            <person name="Clauser K.R."/>
            <person name="Holland J.W."/>
            <person name="Pineda S.S."/>
            <person name="King G.F."/>
            <person name="Fry B.G."/>
        </authorList>
    </citation>
    <scope>NUCLEOTIDE SEQUENCE [MRNA]</scope>
    <scope>NOMENCLATURE</scope>
    <source>
        <tissue>Venom gland</tissue>
    </source>
</reference>